<gene>
    <name evidence="1" type="primary">ileS</name>
    <name type="ordered locus">NIS_1282</name>
</gene>
<proteinExistence type="inferred from homology"/>
<evidence type="ECO:0000255" key="1">
    <source>
        <dbReference type="HAMAP-Rule" id="MF_02002"/>
    </source>
</evidence>
<comment type="function">
    <text evidence="1">Catalyzes the attachment of isoleucine to tRNA(Ile). As IleRS can inadvertently accommodate and process structurally similar amino acids such as valine, to avoid such errors it has two additional distinct tRNA(Ile)-dependent editing activities. One activity is designated as 'pretransfer' editing and involves the hydrolysis of activated Val-AMP. The other activity is designated 'posttransfer' editing and involves deacylation of mischarged Val-tRNA(Ile).</text>
</comment>
<comment type="catalytic activity">
    <reaction evidence="1">
        <text>tRNA(Ile) + L-isoleucine + ATP = L-isoleucyl-tRNA(Ile) + AMP + diphosphate</text>
        <dbReference type="Rhea" id="RHEA:11060"/>
        <dbReference type="Rhea" id="RHEA-COMP:9666"/>
        <dbReference type="Rhea" id="RHEA-COMP:9695"/>
        <dbReference type="ChEBI" id="CHEBI:30616"/>
        <dbReference type="ChEBI" id="CHEBI:33019"/>
        <dbReference type="ChEBI" id="CHEBI:58045"/>
        <dbReference type="ChEBI" id="CHEBI:78442"/>
        <dbReference type="ChEBI" id="CHEBI:78528"/>
        <dbReference type="ChEBI" id="CHEBI:456215"/>
        <dbReference type="EC" id="6.1.1.5"/>
    </reaction>
</comment>
<comment type="cofactor">
    <cofactor evidence="1">
        <name>Zn(2+)</name>
        <dbReference type="ChEBI" id="CHEBI:29105"/>
    </cofactor>
    <text evidence="1">Binds 1 zinc ion per subunit.</text>
</comment>
<comment type="subunit">
    <text evidence="1">Monomer.</text>
</comment>
<comment type="subcellular location">
    <subcellularLocation>
        <location evidence="1">Cytoplasm</location>
    </subcellularLocation>
</comment>
<comment type="domain">
    <text evidence="1">IleRS has two distinct active sites: one for aminoacylation and one for editing. The misactivated valine is translocated from the active site to the editing site, which sterically excludes the correctly activated isoleucine. The single editing site contains two valyl binding pockets, one specific for each substrate (Val-AMP or Val-tRNA(Ile)).</text>
</comment>
<comment type="similarity">
    <text evidence="1">Belongs to the class-I aminoacyl-tRNA synthetase family. IleS type 1 subfamily.</text>
</comment>
<protein>
    <recommendedName>
        <fullName evidence="1">Isoleucine--tRNA ligase</fullName>
        <ecNumber evidence="1">6.1.1.5</ecNumber>
    </recommendedName>
    <alternativeName>
        <fullName evidence="1">Isoleucyl-tRNA synthetase</fullName>
        <shortName evidence="1">IleRS</shortName>
    </alternativeName>
</protein>
<name>SYI_NITSB</name>
<feature type="chain" id="PRO_1000022095" description="Isoleucine--tRNA ligase">
    <location>
        <begin position="1"/>
        <end position="918"/>
    </location>
</feature>
<feature type="short sequence motif" description="'HIGH' region">
    <location>
        <begin position="57"/>
        <end position="67"/>
    </location>
</feature>
<feature type="short sequence motif" description="'KMSKS' region">
    <location>
        <begin position="605"/>
        <end position="609"/>
    </location>
</feature>
<feature type="binding site" evidence="1">
    <location>
        <position position="564"/>
    </location>
    <ligand>
        <name>L-isoleucyl-5'-AMP</name>
        <dbReference type="ChEBI" id="CHEBI:178002"/>
    </ligand>
</feature>
<feature type="binding site" evidence="1">
    <location>
        <position position="608"/>
    </location>
    <ligand>
        <name>ATP</name>
        <dbReference type="ChEBI" id="CHEBI:30616"/>
    </ligand>
</feature>
<feature type="binding site" evidence="1">
    <location>
        <position position="888"/>
    </location>
    <ligand>
        <name>Zn(2+)</name>
        <dbReference type="ChEBI" id="CHEBI:29105"/>
    </ligand>
</feature>
<feature type="binding site" evidence="1">
    <location>
        <position position="891"/>
    </location>
    <ligand>
        <name>Zn(2+)</name>
        <dbReference type="ChEBI" id="CHEBI:29105"/>
    </ligand>
</feature>
<feature type="binding site" evidence="1">
    <location>
        <position position="903"/>
    </location>
    <ligand>
        <name>Zn(2+)</name>
        <dbReference type="ChEBI" id="CHEBI:29105"/>
    </ligand>
</feature>
<feature type="binding site" evidence="1">
    <location>
        <position position="906"/>
    </location>
    <ligand>
        <name>Zn(2+)</name>
        <dbReference type="ChEBI" id="CHEBI:29105"/>
    </ligand>
</feature>
<accession>A6Q4I1</accession>
<organism>
    <name type="scientific">Nitratiruptor sp. (strain SB155-2)</name>
    <dbReference type="NCBI Taxonomy" id="387092"/>
    <lineage>
        <taxon>Bacteria</taxon>
        <taxon>Pseudomonadati</taxon>
        <taxon>Campylobacterota</taxon>
        <taxon>Epsilonproteobacteria</taxon>
        <taxon>Nautiliales</taxon>
        <taxon>Nitratiruptoraceae</taxon>
        <taxon>Nitratiruptor</taxon>
    </lineage>
</organism>
<keyword id="KW-0030">Aminoacyl-tRNA synthetase</keyword>
<keyword id="KW-0067">ATP-binding</keyword>
<keyword id="KW-0963">Cytoplasm</keyword>
<keyword id="KW-0436">Ligase</keyword>
<keyword id="KW-0479">Metal-binding</keyword>
<keyword id="KW-0547">Nucleotide-binding</keyword>
<keyword id="KW-0648">Protein biosynthesis</keyword>
<keyword id="KW-1185">Reference proteome</keyword>
<keyword id="KW-0862">Zinc</keyword>
<sequence>MDYKETLLLPKTTFPMRGNLPQNEPKRFAKWFEKDVYEKMKKSREGKELFTLHDGPPYANGHIHIGHALNKILKDIIVKFNYFEGKAVRFTPGWDCHGLPIEQQVEKKLGTAKKEQLPKTKIRELCREHAAKFVGIQKEEFKNLGVIADWEKPYLTMDYAFEADIYRALCEIAKEGLLVERSKPVYWSWAAKTALAEAEVEYEDKVSPSIYVAFKLDKEAVQKIGKEASIIIWTTTPWTLPANTGIALNPDIEYVLTSDGYVVAADLLDELKEKGIVKGDVEKSISPKDLENLHAINPLNGRRSRIVLGEHVTTESGTGAVHTAPGHGEDDYRVGLKYDLEVLMPVDDAGRYDETIVREKLLPEEFVGMNVFEANDKICELLGDALLKKEDIKHSYPHCWRTHKPIIFRATKQWFIAVDKAPKDLQKTLRQIALEEVEKTTFYPEWGRNRLKSMIENRPDWCISRQRDWGVPIAFFRNKKTGEVIYDEKVLNYIAMIFERMGTDAWYSLSVEELLYPGSGYDPNDLEKVMDILDVWFDSGSTWYAVLKSRRYDAGNYPADLYLEGSDQHRGWFQSSLLVSGAIEKRAPFKAILTHGFTVDEKGEKMSKSKGNVVAPMDVAKKYGVEILRLWVAMSDYQSDLKISDNILKQIAEQYRKLRNTFRFMLANINDLETIQSDFGVLDRWILAKAKSVFEEVEKQFKNYQFAKGFSALNNFIVNEFSGIYLDVCKDRLYCDALNDSHRRASQSAMALIAKSMLGLIAPVLTYTADEIVEHAPSVLRNDAEDIFDFAIEPLPEIQSDFDEVYMIEARSKFNEIVDQLKKKKIIKSSLELVIETTSSKVLALDATEREDWFIVSGVEEEIGSKELGDFKVEGDQFIIKEAILHKCPRCWKYKAKEEGALCERCQKVVDGLEQAGS</sequence>
<reference key="1">
    <citation type="journal article" date="2007" name="Proc. Natl. Acad. Sci. U.S.A.">
        <title>Deep-sea vent epsilon-proteobacterial genomes provide insights into emergence of pathogens.</title>
        <authorList>
            <person name="Nakagawa S."/>
            <person name="Takaki Y."/>
            <person name="Shimamura S."/>
            <person name="Reysenbach A.-L."/>
            <person name="Takai K."/>
            <person name="Horikoshi K."/>
        </authorList>
    </citation>
    <scope>NUCLEOTIDE SEQUENCE [LARGE SCALE GENOMIC DNA]</scope>
    <source>
        <strain>SB155-2</strain>
    </source>
</reference>
<dbReference type="EC" id="6.1.1.5" evidence="1"/>
<dbReference type="EMBL" id="AP009178">
    <property type="protein sequence ID" value="BAF70390.1"/>
    <property type="molecule type" value="Genomic_DNA"/>
</dbReference>
<dbReference type="RefSeq" id="WP_012082653.1">
    <property type="nucleotide sequence ID" value="NC_009662.1"/>
</dbReference>
<dbReference type="SMR" id="A6Q4I1"/>
<dbReference type="FunCoup" id="A6Q4I1">
    <property type="interactions" value="450"/>
</dbReference>
<dbReference type="STRING" id="387092.NIS_1282"/>
<dbReference type="KEGG" id="nis:NIS_1282"/>
<dbReference type="eggNOG" id="COG0060">
    <property type="taxonomic scope" value="Bacteria"/>
</dbReference>
<dbReference type="HOGENOM" id="CLU_001493_7_0_7"/>
<dbReference type="InParanoid" id="A6Q4I1"/>
<dbReference type="OrthoDB" id="9810365at2"/>
<dbReference type="Proteomes" id="UP000001118">
    <property type="component" value="Chromosome"/>
</dbReference>
<dbReference type="GO" id="GO:0005829">
    <property type="term" value="C:cytosol"/>
    <property type="evidence" value="ECO:0007669"/>
    <property type="project" value="TreeGrafter"/>
</dbReference>
<dbReference type="GO" id="GO:0002161">
    <property type="term" value="F:aminoacyl-tRNA deacylase activity"/>
    <property type="evidence" value="ECO:0007669"/>
    <property type="project" value="InterPro"/>
</dbReference>
<dbReference type="GO" id="GO:0005524">
    <property type="term" value="F:ATP binding"/>
    <property type="evidence" value="ECO:0007669"/>
    <property type="project" value="UniProtKB-UniRule"/>
</dbReference>
<dbReference type="GO" id="GO:0004822">
    <property type="term" value="F:isoleucine-tRNA ligase activity"/>
    <property type="evidence" value="ECO:0007669"/>
    <property type="project" value="UniProtKB-UniRule"/>
</dbReference>
<dbReference type="GO" id="GO:0000049">
    <property type="term" value="F:tRNA binding"/>
    <property type="evidence" value="ECO:0007669"/>
    <property type="project" value="InterPro"/>
</dbReference>
<dbReference type="GO" id="GO:0008270">
    <property type="term" value="F:zinc ion binding"/>
    <property type="evidence" value="ECO:0007669"/>
    <property type="project" value="UniProtKB-UniRule"/>
</dbReference>
<dbReference type="GO" id="GO:0006428">
    <property type="term" value="P:isoleucyl-tRNA aminoacylation"/>
    <property type="evidence" value="ECO:0007669"/>
    <property type="project" value="UniProtKB-UniRule"/>
</dbReference>
<dbReference type="CDD" id="cd07960">
    <property type="entry name" value="Anticodon_Ia_Ile_BEm"/>
    <property type="match status" value="1"/>
</dbReference>
<dbReference type="CDD" id="cd00818">
    <property type="entry name" value="IleRS_core"/>
    <property type="match status" value="1"/>
</dbReference>
<dbReference type="FunFam" id="3.40.50.620:FF:000042">
    <property type="entry name" value="Isoleucine--tRNA ligase"/>
    <property type="match status" value="1"/>
</dbReference>
<dbReference type="Gene3D" id="1.10.730.20">
    <property type="match status" value="1"/>
</dbReference>
<dbReference type="Gene3D" id="3.40.50.620">
    <property type="entry name" value="HUPs"/>
    <property type="match status" value="2"/>
</dbReference>
<dbReference type="Gene3D" id="3.90.740.10">
    <property type="entry name" value="Valyl/Leucyl/Isoleucyl-tRNA synthetase, editing domain"/>
    <property type="match status" value="1"/>
</dbReference>
<dbReference type="HAMAP" id="MF_02002">
    <property type="entry name" value="Ile_tRNA_synth_type1"/>
    <property type="match status" value="1"/>
</dbReference>
<dbReference type="InterPro" id="IPR001412">
    <property type="entry name" value="aa-tRNA-synth_I_CS"/>
</dbReference>
<dbReference type="InterPro" id="IPR002300">
    <property type="entry name" value="aa-tRNA-synth_Ia"/>
</dbReference>
<dbReference type="InterPro" id="IPR033708">
    <property type="entry name" value="Anticodon_Ile_BEm"/>
</dbReference>
<dbReference type="InterPro" id="IPR002301">
    <property type="entry name" value="Ile-tRNA-ligase"/>
</dbReference>
<dbReference type="InterPro" id="IPR023585">
    <property type="entry name" value="Ile-tRNA-ligase_type1"/>
</dbReference>
<dbReference type="InterPro" id="IPR050081">
    <property type="entry name" value="Ile-tRNA_ligase"/>
</dbReference>
<dbReference type="InterPro" id="IPR013155">
    <property type="entry name" value="M/V/L/I-tRNA-synth_anticd-bd"/>
</dbReference>
<dbReference type="InterPro" id="IPR014729">
    <property type="entry name" value="Rossmann-like_a/b/a_fold"/>
</dbReference>
<dbReference type="InterPro" id="IPR009080">
    <property type="entry name" value="tRNAsynth_Ia_anticodon-bd"/>
</dbReference>
<dbReference type="InterPro" id="IPR009008">
    <property type="entry name" value="Val/Leu/Ile-tRNA-synth_edit"/>
</dbReference>
<dbReference type="NCBIfam" id="TIGR00392">
    <property type="entry name" value="ileS"/>
    <property type="match status" value="1"/>
</dbReference>
<dbReference type="PANTHER" id="PTHR42765:SF1">
    <property type="entry name" value="ISOLEUCINE--TRNA LIGASE, MITOCHONDRIAL"/>
    <property type="match status" value="1"/>
</dbReference>
<dbReference type="PANTHER" id="PTHR42765">
    <property type="entry name" value="SOLEUCYL-TRNA SYNTHETASE"/>
    <property type="match status" value="1"/>
</dbReference>
<dbReference type="Pfam" id="PF08264">
    <property type="entry name" value="Anticodon_1"/>
    <property type="match status" value="1"/>
</dbReference>
<dbReference type="Pfam" id="PF00133">
    <property type="entry name" value="tRNA-synt_1"/>
    <property type="match status" value="1"/>
</dbReference>
<dbReference type="PRINTS" id="PR00984">
    <property type="entry name" value="TRNASYNTHILE"/>
</dbReference>
<dbReference type="SUPFAM" id="SSF47323">
    <property type="entry name" value="Anticodon-binding domain of a subclass of class I aminoacyl-tRNA synthetases"/>
    <property type="match status" value="1"/>
</dbReference>
<dbReference type="SUPFAM" id="SSF52374">
    <property type="entry name" value="Nucleotidylyl transferase"/>
    <property type="match status" value="1"/>
</dbReference>
<dbReference type="SUPFAM" id="SSF50677">
    <property type="entry name" value="ValRS/IleRS/LeuRS editing domain"/>
    <property type="match status" value="1"/>
</dbReference>
<dbReference type="PROSITE" id="PS00178">
    <property type="entry name" value="AA_TRNA_LIGASE_I"/>
    <property type="match status" value="1"/>
</dbReference>